<organism>
    <name type="scientific">Thermoanaerobacter pseudethanolicus (strain ATCC 33223 / 39E)</name>
    <name type="common">Clostridium thermohydrosulfuricum</name>
    <dbReference type="NCBI Taxonomy" id="340099"/>
    <lineage>
        <taxon>Bacteria</taxon>
        <taxon>Bacillati</taxon>
        <taxon>Bacillota</taxon>
        <taxon>Clostridia</taxon>
        <taxon>Thermoanaerobacterales</taxon>
        <taxon>Thermoanaerobacteraceae</taxon>
        <taxon>Thermoanaerobacter</taxon>
    </lineage>
</organism>
<evidence type="ECO:0000255" key="1">
    <source>
        <dbReference type="HAMAP-Rule" id="MF_00267"/>
    </source>
</evidence>
<name>MINC_THEP3</name>
<reference key="1">
    <citation type="submission" date="2008-01" db="EMBL/GenBank/DDBJ databases">
        <title>Complete sequence of Thermoanaerobacter pseudethanolicus 39E.</title>
        <authorList>
            <person name="Copeland A."/>
            <person name="Lucas S."/>
            <person name="Lapidus A."/>
            <person name="Barry K."/>
            <person name="Glavina del Rio T."/>
            <person name="Dalin E."/>
            <person name="Tice H."/>
            <person name="Pitluck S."/>
            <person name="Bruce D."/>
            <person name="Goodwin L."/>
            <person name="Saunders E."/>
            <person name="Brettin T."/>
            <person name="Detter J.C."/>
            <person name="Han C."/>
            <person name="Schmutz J."/>
            <person name="Larimer F."/>
            <person name="Land M."/>
            <person name="Hauser L."/>
            <person name="Kyrpides N."/>
            <person name="Lykidis A."/>
            <person name="Hemme C."/>
            <person name="Fields M.W."/>
            <person name="He Z."/>
            <person name="Zhou J."/>
            <person name="Richardson P."/>
        </authorList>
    </citation>
    <scope>NUCLEOTIDE SEQUENCE [LARGE SCALE GENOMIC DNA]</scope>
    <source>
        <strain>ATCC 33223 / DSM 2355 / 39E</strain>
    </source>
</reference>
<proteinExistence type="inferred from homology"/>
<accession>B0KAD5</accession>
<dbReference type="EMBL" id="CP000924">
    <property type="protein sequence ID" value="ABY95098.1"/>
    <property type="molecule type" value="Genomic_DNA"/>
</dbReference>
<dbReference type="RefSeq" id="WP_003866923.1">
    <property type="nucleotide sequence ID" value="NC_010321.1"/>
</dbReference>
<dbReference type="SMR" id="B0KAD5"/>
<dbReference type="STRING" id="340099.Teth39_1448"/>
<dbReference type="KEGG" id="tpd:Teth39_1448"/>
<dbReference type="eggNOG" id="COG0850">
    <property type="taxonomic scope" value="Bacteria"/>
</dbReference>
<dbReference type="HOGENOM" id="CLU_048711_2_0_9"/>
<dbReference type="Proteomes" id="UP000002156">
    <property type="component" value="Chromosome"/>
</dbReference>
<dbReference type="GO" id="GO:0000902">
    <property type="term" value="P:cell morphogenesis"/>
    <property type="evidence" value="ECO:0007669"/>
    <property type="project" value="InterPro"/>
</dbReference>
<dbReference type="GO" id="GO:0000917">
    <property type="term" value="P:division septum assembly"/>
    <property type="evidence" value="ECO:0007669"/>
    <property type="project" value="UniProtKB-KW"/>
</dbReference>
<dbReference type="GO" id="GO:0051302">
    <property type="term" value="P:regulation of cell division"/>
    <property type="evidence" value="ECO:0007669"/>
    <property type="project" value="InterPro"/>
</dbReference>
<dbReference type="GO" id="GO:1901891">
    <property type="term" value="P:regulation of cell septum assembly"/>
    <property type="evidence" value="ECO:0007669"/>
    <property type="project" value="InterPro"/>
</dbReference>
<dbReference type="Gene3D" id="2.160.20.70">
    <property type="match status" value="1"/>
</dbReference>
<dbReference type="Gene3D" id="3.30.160.540">
    <property type="match status" value="1"/>
</dbReference>
<dbReference type="HAMAP" id="MF_00267">
    <property type="entry name" value="MinC"/>
    <property type="match status" value="1"/>
</dbReference>
<dbReference type="InterPro" id="IPR016098">
    <property type="entry name" value="CAP/MinC_C"/>
</dbReference>
<dbReference type="InterPro" id="IPR013033">
    <property type="entry name" value="MinC"/>
</dbReference>
<dbReference type="InterPro" id="IPR036145">
    <property type="entry name" value="MinC_C_sf"/>
</dbReference>
<dbReference type="InterPro" id="IPR007874">
    <property type="entry name" value="MinC_N"/>
</dbReference>
<dbReference type="InterPro" id="IPR005526">
    <property type="entry name" value="Septum_form_inhib_MinC_C"/>
</dbReference>
<dbReference type="NCBIfam" id="TIGR01222">
    <property type="entry name" value="minC"/>
    <property type="match status" value="1"/>
</dbReference>
<dbReference type="PANTHER" id="PTHR34108">
    <property type="entry name" value="SEPTUM SITE-DETERMINING PROTEIN MINC"/>
    <property type="match status" value="1"/>
</dbReference>
<dbReference type="PANTHER" id="PTHR34108:SF1">
    <property type="entry name" value="SEPTUM SITE-DETERMINING PROTEIN MINC"/>
    <property type="match status" value="1"/>
</dbReference>
<dbReference type="Pfam" id="PF03775">
    <property type="entry name" value="MinC_C"/>
    <property type="match status" value="1"/>
</dbReference>
<dbReference type="Pfam" id="PF05209">
    <property type="entry name" value="MinC_N"/>
    <property type="match status" value="1"/>
</dbReference>
<dbReference type="SUPFAM" id="SSF63848">
    <property type="entry name" value="Cell-division inhibitor MinC, C-terminal domain"/>
    <property type="match status" value="1"/>
</dbReference>
<feature type="chain" id="PRO_1000114296" description="Probable septum site-determining protein MinC">
    <location>
        <begin position="1"/>
        <end position="214"/>
    </location>
</feature>
<gene>
    <name evidence="1" type="primary">minC</name>
    <name type="ordered locus">Teth39_1448</name>
</gene>
<sequence length="214" mass="23773">MIKEAIKIQGTKEGLVIVLEEDVDIETLKEKIVNRIEKSLKFFEGATLTVRVKSLSVKEEKLQELKDVIFEKYGIEVRIKNFQEKHIKNVTDDEIFNGLEEGITKFHKGTVRSGQVVKYHGNLVIIGDVNPGGLVQAAGNIVVMGTLRGIAHAGFTGNKEAVIVASSLRAMQLRIANVISRAPDKDDASDYPEIAVVKKGKIIVKPLYHLNDLW</sequence>
<comment type="function">
    <text evidence="1">Cell division inhibitor that blocks the formation of polar Z ring septums. Rapidly oscillates between the poles of the cell to destabilize FtsZ filaments that have formed before they mature into polar Z rings. Prevents FtsZ polymerization.</text>
</comment>
<comment type="subunit">
    <text evidence="1">Interacts with MinD and FtsZ.</text>
</comment>
<comment type="similarity">
    <text evidence="1">Belongs to the MinC family.</text>
</comment>
<keyword id="KW-0131">Cell cycle</keyword>
<keyword id="KW-0132">Cell division</keyword>
<keyword id="KW-1185">Reference proteome</keyword>
<keyword id="KW-0717">Septation</keyword>
<protein>
    <recommendedName>
        <fullName evidence="1">Probable septum site-determining protein MinC</fullName>
    </recommendedName>
</protein>